<evidence type="ECO:0000250" key="1">
    <source>
        <dbReference type="UniProtKB" id="P48436"/>
    </source>
</evidence>
<evidence type="ECO:0000250" key="2">
    <source>
        <dbReference type="UniProtKB" id="Q04887"/>
    </source>
</evidence>
<evidence type="ECO:0000255" key="3">
    <source>
        <dbReference type="PROSITE-ProRule" id="PRU00267"/>
    </source>
</evidence>
<evidence type="ECO:0000256" key="4">
    <source>
        <dbReference type="SAM" id="MobiDB-lite"/>
    </source>
</evidence>
<evidence type="ECO:0000305" key="5"/>
<comment type="function">
    <text evidence="2">Transcription factor that plays a key role in chondrocytes differentiation and skeletal development. Specifically binds the 5'-ACAAAG-3' DNA motif present in enhancers and super-enhancers and promotes expression of genes important for chondrogenesis, including cartilage matrix protein-coding genes COL2A1, COL4A2, COL9A1, COL11A2 and ACAN, SOX5 and SOX6. Also binds to some promoter regions. Plays a central role in successive steps of chondrocyte differentiation. Absolutely required for precartilaginous condensation, the first step in chondrogenesis during which skeletal progenitors differentiate into prechondrocytes. Together with SOX5 and SOX6, required for overt chondrogenesis when condensed prechondrocytes differentiate into early stage chondrocytes, the second step in chondrogenesis. Later, required to direct hypertrophic maturation and block osteoblast differentiation of growth plate chondrocytes: maintains chondrocyte columnar proliferation, delays prehypertrophy and then prevents osteoblastic differentiation of chondrocytes by lowering beta-catenin (CTNNB1) signaling and RUNX2 expression. Also required for chondrocyte hypertrophy, both indirectly, by keeping the lineage fate of chondrocytes, and directly, by remaining present in upper hypertrophic cells and transactivating COL10A1 along with MEF2C. Low lipid levels are the main nutritional determinant for chondrogenic commitment of skeletal progenitor cells: when lipids levels are low, FOXO (FOXO1 and FOXO3) transcription factors promote expression of SOX9, which induces chondrogenic commitment and suppresses fatty acid oxidation. Mechanistically, helps, but is not required, to remove epigenetic signatures of transcriptional repression and deposit active promoter and enhancer marks at chondrocyte-specific genes. Acts in cooperation with the Hedgehog pathway-dependent GLI (GLI1 and GLI3) transcription factors. In addition to cartilage development, also acts as a regulator of proliferation and differentiation in epithelial stem/progenitor cells: involved in the lung epithelium during branching morphogenesis, by balancing proliferation and differentiation and regulating the extracellular matrix. Controls epithelial branching during kidney development.</text>
</comment>
<comment type="subunit">
    <text evidence="1 2">Homodimer; homodimerization is required for activity. Interacts (via C-terminus) with ZNF219; forming a complex that binds to the COL2A1 promoter and activates COL2A1 expression (By similarity). Interacts with DDRGK1. Interacts with EP300/p300 (By similarity). Interacts with beta-catenin (CTNNB1); inhibiting CTNNB1 activity by competing with the binding sites of TCF/LEF within CTNNB1 (By similarity).</text>
</comment>
<comment type="subcellular location">
    <subcellularLocation>
        <location evidence="2 3">Nucleus</location>
    </subcellularLocation>
</comment>
<comment type="domain">
    <text evidence="1">The transactivation domains TAM and TAC (for transactivation domain in the middle and at the C-terminus, respectively) are required to contact transcriptional coactivators and basal transcriptional machinery components and thereby induce gene transactivation.</text>
</comment>
<comment type="domain">
    <text evidence="1">The 9aaTAD motif is a transactivation domain present in a large number of yeast and animal transcription factors.</text>
</comment>
<comment type="domain">
    <text evidence="1">The PQA region (for proline, glutamine and alanine-rich) helps stabilize SOX9 and facilitates transactivation. It lacks intrinsic transactivation capability.</text>
</comment>
<comment type="PTM">
    <text evidence="2">Acetylated; acetylation impairs nuclear localization and ability to transactivate expression of target genes. Deacetylated by SIRT1.</text>
</comment>
<comment type="PTM">
    <text evidence="2">Phosphorylation at Ser-64 and Ser-211 by PKA increases transcriptional activity and may help delay chondrocyte maturation downstream of PTHLH/PTHrP signaling. Phosphorylation at either Ser-64 or Ser-211 is required for sumoylation, but phosphorylation is not dependent on sumoylation. Phosphorylated on tyrosine residues; tyrosine dephosphorylation by PTPN11/SHP2 blocks SOX9 phosphorylation by PKA and subsequent SUMOylation.</text>
</comment>
<comment type="PTM">
    <text evidence="2">Sumoylated; phosphorylation at either Ser-64 or Ser-211 is required for sumoylation. Sumoylation is induced by BMP signaling pathway.</text>
</comment>
<comment type="PTM">
    <text evidence="2">Ubiquitinated; ubiquitination leads to proteasomal degradation and is negatively regulated by DDRGK1.</text>
</comment>
<sequence length="509" mass="56137">MNLLDPFMKMTDEQEKGLSGAPSPTMSEDSAGSPCPSGSGSDTENTRPQENTFPKGEPDLKKESEEDKFPVCIREAVSQVLKGYDWTLVPMPVRVNGSSKNKPHVKRPMNAFMVWAQAARRKLADQYPHLHNAELSKTLGKLWRLLNESEKRPFVEEAERLRVQHKKDHPDYKYQPRRRKSVKNGQAEAEEATEQTHISPNAIFKALQADSPHSSSGMSEVHSPGEHSGQSQGPPTPPTTPKTDVQPGKADLKREGRPLPEGGRQPPIDFRDVDIGELSSDVISNIETFDVNEFDQYLPPNGHPGVPATHGQVTYTGSYGISSTAATPASAGHVWMSKQQAPPPPPQQPPQAPPAPQAPPQPQAAPPQQPAAPPQQPQAHTLTTLSSEPGQSQRTHIKTEQLSPSHYSEQQQHSPQQIAYSPFNLPHYSPSYPPITRSQYDYTDHQNSSSYYSHAAGQGTGLYSTFTYMNPAQRPMYTPIADTSGVPSIPQTHSPQHWEQPVYTQLTRP</sequence>
<dbReference type="EMBL" id="AF322900">
    <property type="protein sequence ID" value="AAK01651.1"/>
    <property type="molecule type" value="mRNA"/>
</dbReference>
<dbReference type="RefSeq" id="NP_001028040.1">
    <property type="nucleotide sequence ID" value="NM_001032868.1"/>
</dbReference>
<dbReference type="SMR" id="P61753"/>
<dbReference type="FunCoup" id="P61753">
    <property type="interactions" value="1256"/>
</dbReference>
<dbReference type="STRING" id="9544.ENSMMUP00000073101"/>
<dbReference type="PaxDb" id="9544-ENSMMUP00000003236"/>
<dbReference type="GeneID" id="574208"/>
<dbReference type="KEGG" id="mcc:574208"/>
<dbReference type="CTD" id="6662"/>
<dbReference type="eggNOG" id="KOG0527">
    <property type="taxonomic scope" value="Eukaryota"/>
</dbReference>
<dbReference type="InParanoid" id="P61753"/>
<dbReference type="OrthoDB" id="6247875at2759"/>
<dbReference type="Proteomes" id="UP000006718">
    <property type="component" value="Unassembled WGS sequence"/>
</dbReference>
<dbReference type="GO" id="GO:0005634">
    <property type="term" value="C:nucleus"/>
    <property type="evidence" value="ECO:0000250"/>
    <property type="project" value="UniProtKB"/>
</dbReference>
<dbReference type="GO" id="GO:0032991">
    <property type="term" value="C:protein-containing complex"/>
    <property type="evidence" value="ECO:0000250"/>
    <property type="project" value="UniProtKB"/>
</dbReference>
<dbReference type="GO" id="GO:0003682">
    <property type="term" value="F:chromatin binding"/>
    <property type="evidence" value="ECO:0000250"/>
    <property type="project" value="UniProtKB"/>
</dbReference>
<dbReference type="GO" id="GO:0000987">
    <property type="term" value="F:cis-regulatory region sequence-specific DNA binding"/>
    <property type="evidence" value="ECO:0000250"/>
    <property type="project" value="UniProtKB"/>
</dbReference>
<dbReference type="GO" id="GO:0003677">
    <property type="term" value="F:DNA binding"/>
    <property type="evidence" value="ECO:0000250"/>
    <property type="project" value="UniProtKB"/>
</dbReference>
<dbReference type="GO" id="GO:0001228">
    <property type="term" value="F:DNA-binding transcription activator activity, RNA polymerase II-specific"/>
    <property type="evidence" value="ECO:0000250"/>
    <property type="project" value="UniProtKB"/>
</dbReference>
<dbReference type="GO" id="GO:0003700">
    <property type="term" value="F:DNA-binding transcription factor activity"/>
    <property type="evidence" value="ECO:0000250"/>
    <property type="project" value="UniProtKB"/>
</dbReference>
<dbReference type="GO" id="GO:0000981">
    <property type="term" value="F:DNA-binding transcription factor activity, RNA polymerase II-specific"/>
    <property type="evidence" value="ECO:0000250"/>
    <property type="project" value="UniProtKB"/>
</dbReference>
<dbReference type="GO" id="GO:0000978">
    <property type="term" value="F:RNA polymerase II cis-regulatory region sequence-specific DNA binding"/>
    <property type="evidence" value="ECO:0000250"/>
    <property type="project" value="UniProtKB"/>
</dbReference>
<dbReference type="GO" id="GO:0043565">
    <property type="term" value="F:sequence-specific DNA binding"/>
    <property type="evidence" value="ECO:0000250"/>
    <property type="project" value="UniProtKB"/>
</dbReference>
<dbReference type="GO" id="GO:0001502">
    <property type="term" value="P:cartilage condensation"/>
    <property type="evidence" value="ECO:0000250"/>
    <property type="project" value="UniProtKB"/>
</dbReference>
<dbReference type="GO" id="GO:0051216">
    <property type="term" value="P:cartilage development"/>
    <property type="evidence" value="ECO:0000250"/>
    <property type="project" value="UniProtKB"/>
</dbReference>
<dbReference type="GO" id="GO:0001708">
    <property type="term" value="P:cell fate specification"/>
    <property type="evidence" value="ECO:0000250"/>
    <property type="project" value="UniProtKB"/>
</dbReference>
<dbReference type="GO" id="GO:0071773">
    <property type="term" value="P:cellular response to BMP stimulus"/>
    <property type="evidence" value="ECO:0000250"/>
    <property type="project" value="UniProtKB"/>
</dbReference>
<dbReference type="GO" id="GO:0071364">
    <property type="term" value="P:cellular response to epidermal growth factor stimulus"/>
    <property type="evidence" value="ECO:0000250"/>
    <property type="project" value="UniProtKB"/>
</dbReference>
<dbReference type="GO" id="GO:0071504">
    <property type="term" value="P:cellular response to heparin"/>
    <property type="evidence" value="ECO:0000250"/>
    <property type="project" value="UniProtKB"/>
</dbReference>
<dbReference type="GO" id="GO:0071260">
    <property type="term" value="P:cellular response to mechanical stimulus"/>
    <property type="evidence" value="ECO:0000250"/>
    <property type="project" value="UniProtKB"/>
</dbReference>
<dbReference type="GO" id="GO:0071560">
    <property type="term" value="P:cellular response to transforming growth factor beta stimulus"/>
    <property type="evidence" value="ECO:0000250"/>
    <property type="project" value="UniProtKB"/>
</dbReference>
<dbReference type="GO" id="GO:0002062">
    <property type="term" value="P:chondrocyte differentiation"/>
    <property type="evidence" value="ECO:0000250"/>
    <property type="project" value="UniProtKB"/>
</dbReference>
<dbReference type="GO" id="GO:0003413">
    <property type="term" value="P:chondrocyte differentiation involved in endochondral bone morphogenesis"/>
    <property type="evidence" value="ECO:0000250"/>
    <property type="project" value="UniProtKB"/>
</dbReference>
<dbReference type="GO" id="GO:0003415">
    <property type="term" value="P:chondrocyte hypertrophy"/>
    <property type="evidence" value="ECO:0000250"/>
    <property type="project" value="UniProtKB"/>
</dbReference>
<dbReference type="GO" id="GO:0006338">
    <property type="term" value="P:chromatin remodeling"/>
    <property type="evidence" value="ECO:0000250"/>
    <property type="project" value="UniProtKB"/>
</dbReference>
<dbReference type="GO" id="GO:0090103">
    <property type="term" value="P:cochlea morphogenesis"/>
    <property type="evidence" value="ECO:0000250"/>
    <property type="project" value="UniProtKB"/>
</dbReference>
<dbReference type="GO" id="GO:0003203">
    <property type="term" value="P:endocardial cushion morphogenesis"/>
    <property type="evidence" value="ECO:0000250"/>
    <property type="project" value="UniProtKB"/>
</dbReference>
<dbReference type="GO" id="GO:0007173">
    <property type="term" value="P:epidermal growth factor receptor signaling pathway"/>
    <property type="evidence" value="ECO:0000250"/>
    <property type="project" value="UniProtKB"/>
</dbReference>
<dbReference type="GO" id="GO:0060517">
    <property type="term" value="P:epithelial cell proliferation involved in prostatic bud elongation"/>
    <property type="evidence" value="ECO:0000250"/>
    <property type="project" value="UniProtKB"/>
</dbReference>
<dbReference type="GO" id="GO:0001837">
    <property type="term" value="P:epithelial to mesenchymal transition"/>
    <property type="evidence" value="ECO:0000250"/>
    <property type="project" value="UniProtKB"/>
</dbReference>
<dbReference type="GO" id="GO:0070371">
    <property type="term" value="P:ERK1 and ERK2 cascade"/>
    <property type="evidence" value="ECO:0000250"/>
    <property type="project" value="UniProtKB"/>
</dbReference>
<dbReference type="GO" id="GO:0003430">
    <property type="term" value="P:growth plate cartilage chondrocyte growth"/>
    <property type="evidence" value="ECO:0000250"/>
    <property type="project" value="UniProtKB"/>
</dbReference>
<dbReference type="GO" id="GO:0001942">
    <property type="term" value="P:hair follicle development"/>
    <property type="evidence" value="ECO:0000250"/>
    <property type="project" value="UniProtKB"/>
</dbReference>
<dbReference type="GO" id="GO:0007507">
    <property type="term" value="P:heart development"/>
    <property type="evidence" value="ECO:0000318"/>
    <property type="project" value="GO_Central"/>
</dbReference>
<dbReference type="GO" id="GO:0003170">
    <property type="term" value="P:heart valve development"/>
    <property type="evidence" value="ECO:0000250"/>
    <property type="project" value="UniProtKB"/>
</dbReference>
<dbReference type="GO" id="GO:0003179">
    <property type="term" value="P:heart valve morphogenesis"/>
    <property type="evidence" value="ECO:0000250"/>
    <property type="project" value="UniProtKB"/>
</dbReference>
<dbReference type="GO" id="GO:0060729">
    <property type="term" value="P:intestinal epithelial structure maintenance"/>
    <property type="evidence" value="ECO:0000250"/>
    <property type="project" value="UniProtKB"/>
</dbReference>
<dbReference type="GO" id="GO:0019100">
    <property type="term" value="P:male germ-line sex determination"/>
    <property type="evidence" value="ECO:0000250"/>
    <property type="project" value="UniProtKB"/>
</dbReference>
<dbReference type="GO" id="GO:0008584">
    <property type="term" value="P:male gonad development"/>
    <property type="evidence" value="ECO:0000250"/>
    <property type="project" value="UniProtKB"/>
</dbReference>
<dbReference type="GO" id="GO:0072289">
    <property type="term" value="P:metanephric nephron tubule formation"/>
    <property type="evidence" value="ECO:0000250"/>
    <property type="project" value="UniProtKB"/>
</dbReference>
<dbReference type="GO" id="GO:0061138">
    <property type="term" value="P:morphogenesis of a branching epithelium"/>
    <property type="evidence" value="ECO:0000250"/>
    <property type="project" value="UniProtKB"/>
</dbReference>
<dbReference type="GO" id="GO:0002009">
    <property type="term" value="P:morphogenesis of an epithelium"/>
    <property type="evidence" value="ECO:0000318"/>
    <property type="project" value="GO_Central"/>
</dbReference>
<dbReference type="GO" id="GO:0043066">
    <property type="term" value="P:negative regulation of apoptotic process"/>
    <property type="evidence" value="ECO:0000250"/>
    <property type="project" value="UniProtKB"/>
</dbReference>
<dbReference type="GO" id="GO:0070168">
    <property type="term" value="P:negative regulation of biomineral tissue development"/>
    <property type="evidence" value="ECO:0000250"/>
    <property type="project" value="UniProtKB"/>
</dbReference>
<dbReference type="GO" id="GO:0090090">
    <property type="term" value="P:negative regulation of canonical Wnt signaling pathway"/>
    <property type="evidence" value="ECO:0000250"/>
    <property type="project" value="UniProtKB"/>
</dbReference>
<dbReference type="GO" id="GO:0032331">
    <property type="term" value="P:negative regulation of chondrocyte differentiation"/>
    <property type="evidence" value="ECO:0000250"/>
    <property type="project" value="UniProtKB"/>
</dbReference>
<dbReference type="GO" id="GO:0045892">
    <property type="term" value="P:negative regulation of DNA-templated transcription"/>
    <property type="evidence" value="ECO:0000250"/>
    <property type="project" value="UniProtKB"/>
</dbReference>
<dbReference type="GO" id="GO:0050680">
    <property type="term" value="P:negative regulation of epithelial cell proliferation"/>
    <property type="evidence" value="ECO:0000250"/>
    <property type="project" value="UniProtKB"/>
</dbReference>
<dbReference type="GO" id="GO:0046322">
    <property type="term" value="P:negative regulation of fatty acid oxidation"/>
    <property type="evidence" value="ECO:0000250"/>
    <property type="project" value="UniProtKB"/>
</dbReference>
<dbReference type="GO" id="GO:0002683">
    <property type="term" value="P:negative regulation of immune system process"/>
    <property type="evidence" value="ECO:0000250"/>
    <property type="project" value="UniProtKB"/>
</dbReference>
<dbReference type="GO" id="GO:0045662">
    <property type="term" value="P:negative regulation of myoblast differentiation"/>
    <property type="evidence" value="ECO:0000250"/>
    <property type="project" value="UniProtKB"/>
</dbReference>
<dbReference type="GO" id="GO:0030279">
    <property type="term" value="P:negative regulation of ossification"/>
    <property type="evidence" value="ECO:0000250"/>
    <property type="project" value="UniProtKB"/>
</dbReference>
<dbReference type="GO" id="GO:0045668">
    <property type="term" value="P:negative regulation of osteoblast differentiation"/>
    <property type="evidence" value="ECO:0000250"/>
    <property type="project" value="UniProtKB"/>
</dbReference>
<dbReference type="GO" id="GO:0046533">
    <property type="term" value="P:negative regulation of photoreceptor cell differentiation"/>
    <property type="evidence" value="ECO:0000250"/>
    <property type="project" value="UniProtKB"/>
</dbReference>
<dbReference type="GO" id="GO:0000122">
    <property type="term" value="P:negative regulation of transcription by RNA polymerase II"/>
    <property type="evidence" value="ECO:0000318"/>
    <property type="project" value="GO_Central"/>
</dbReference>
<dbReference type="GO" id="GO:0014036">
    <property type="term" value="P:neural crest cell fate specification"/>
    <property type="evidence" value="ECO:0000250"/>
    <property type="project" value="UniProtKB"/>
</dbReference>
<dbReference type="GO" id="GO:0006334">
    <property type="term" value="P:nucleosome assembly"/>
    <property type="evidence" value="ECO:0000250"/>
    <property type="project" value="UniProtKB"/>
</dbReference>
<dbReference type="GO" id="GO:0048709">
    <property type="term" value="P:oligodendrocyte differentiation"/>
    <property type="evidence" value="ECO:0000318"/>
    <property type="project" value="GO_Central"/>
</dbReference>
<dbReference type="GO" id="GO:0030916">
    <property type="term" value="P:otic vesicle formation"/>
    <property type="evidence" value="ECO:0000250"/>
    <property type="project" value="UniProtKB"/>
</dbReference>
<dbReference type="GO" id="GO:0090190">
    <property type="term" value="P:positive regulation of branching involved in ureteric bud morphogenesis"/>
    <property type="evidence" value="ECO:0000250"/>
    <property type="project" value="UniProtKB"/>
</dbReference>
<dbReference type="GO" id="GO:0061036">
    <property type="term" value="P:positive regulation of cartilage development"/>
    <property type="evidence" value="ECO:0000250"/>
    <property type="project" value="UniProtKB"/>
</dbReference>
<dbReference type="GO" id="GO:0008284">
    <property type="term" value="P:positive regulation of cell population proliferation"/>
    <property type="evidence" value="ECO:0000250"/>
    <property type="project" value="UniProtKB"/>
</dbReference>
<dbReference type="GO" id="GO:0032332">
    <property type="term" value="P:positive regulation of chondrocyte differentiation"/>
    <property type="evidence" value="ECO:0000250"/>
    <property type="project" value="UniProtKB"/>
</dbReference>
<dbReference type="GO" id="GO:0030858">
    <property type="term" value="P:positive regulation of epithelial cell differentiation"/>
    <property type="evidence" value="ECO:0000250"/>
    <property type="project" value="UniProtKB"/>
</dbReference>
<dbReference type="GO" id="GO:0010634">
    <property type="term" value="P:positive regulation of epithelial cell migration"/>
    <property type="evidence" value="ECO:0000250"/>
    <property type="project" value="UniProtKB"/>
</dbReference>
<dbReference type="GO" id="GO:0050679">
    <property type="term" value="P:positive regulation of epithelial cell proliferation"/>
    <property type="evidence" value="ECO:0000250"/>
    <property type="project" value="UniProtKB"/>
</dbReference>
<dbReference type="GO" id="GO:0010628">
    <property type="term" value="P:positive regulation of gene expression"/>
    <property type="evidence" value="ECO:0000250"/>
    <property type="project" value="UniProtKB"/>
</dbReference>
<dbReference type="GO" id="GO:0090184">
    <property type="term" value="P:positive regulation of kidney development"/>
    <property type="evidence" value="ECO:0000250"/>
    <property type="project" value="UniProtKB"/>
</dbReference>
<dbReference type="GO" id="GO:2000020">
    <property type="term" value="P:positive regulation of male gonad development"/>
    <property type="evidence" value="ECO:0000250"/>
    <property type="project" value="UniProtKB"/>
</dbReference>
<dbReference type="GO" id="GO:0002053">
    <property type="term" value="P:positive regulation of mesenchymal cell proliferation"/>
    <property type="evidence" value="ECO:0000250"/>
    <property type="project" value="UniProtKB"/>
</dbReference>
<dbReference type="GO" id="GO:2000741">
    <property type="term" value="P:positive regulation of mesenchymal stem cell differentiation"/>
    <property type="evidence" value="ECO:0000250"/>
    <property type="project" value="UniProtKB"/>
</dbReference>
<dbReference type="GO" id="GO:0045944">
    <property type="term" value="P:positive regulation of transcription by RNA polymerase II"/>
    <property type="evidence" value="ECO:0000250"/>
    <property type="project" value="UniProtKB"/>
</dbReference>
<dbReference type="GO" id="GO:0065003">
    <property type="term" value="P:protein-containing complex assembly"/>
    <property type="evidence" value="ECO:0000250"/>
    <property type="project" value="UniProtKB"/>
</dbReference>
<dbReference type="GO" id="GO:0042981">
    <property type="term" value="P:regulation of apoptotic process"/>
    <property type="evidence" value="ECO:0000250"/>
    <property type="project" value="UniProtKB"/>
</dbReference>
<dbReference type="GO" id="GO:0061035">
    <property type="term" value="P:regulation of cartilage development"/>
    <property type="evidence" value="ECO:0000250"/>
    <property type="project" value="UniProtKB"/>
</dbReference>
<dbReference type="GO" id="GO:0010564">
    <property type="term" value="P:regulation of cell cycle process"/>
    <property type="evidence" value="ECO:0000250"/>
    <property type="project" value="UniProtKB"/>
</dbReference>
<dbReference type="GO" id="GO:0042127">
    <property type="term" value="P:regulation of cell population proliferation"/>
    <property type="evidence" value="ECO:0000250"/>
    <property type="project" value="UniProtKB"/>
</dbReference>
<dbReference type="GO" id="GO:0060784">
    <property type="term" value="P:regulation of cell proliferation involved in tissue homeostasis"/>
    <property type="evidence" value="ECO:0000250"/>
    <property type="project" value="UniProtKB"/>
</dbReference>
<dbReference type="GO" id="GO:0072034">
    <property type="term" value="P:renal vesicle induction"/>
    <property type="evidence" value="ECO:0000250"/>
    <property type="project" value="UniProtKB"/>
</dbReference>
<dbReference type="GO" id="GO:0070542">
    <property type="term" value="P:response to fatty acid"/>
    <property type="evidence" value="ECO:0000250"/>
    <property type="project" value="UniProtKB"/>
</dbReference>
<dbReference type="GO" id="GO:0060041">
    <property type="term" value="P:retina development in camera-type eye"/>
    <property type="evidence" value="ECO:0000250"/>
    <property type="project" value="UniProtKB"/>
</dbReference>
<dbReference type="GO" id="GO:0060221">
    <property type="term" value="P:retinal rod cell differentiation"/>
    <property type="evidence" value="ECO:0000250"/>
    <property type="project" value="UniProtKB"/>
</dbReference>
<dbReference type="GO" id="GO:0060008">
    <property type="term" value="P:Sertoli cell differentiation"/>
    <property type="evidence" value="ECO:0000250"/>
    <property type="project" value="UniProtKB"/>
</dbReference>
<dbReference type="GO" id="GO:0007165">
    <property type="term" value="P:signal transduction"/>
    <property type="evidence" value="ECO:0000250"/>
    <property type="project" value="UniProtKB"/>
</dbReference>
<dbReference type="GO" id="GO:0001501">
    <property type="term" value="P:skeletal system development"/>
    <property type="evidence" value="ECO:0000250"/>
    <property type="project" value="UniProtKB"/>
</dbReference>
<dbReference type="GO" id="GO:0035019">
    <property type="term" value="P:somatic stem cell population maintenance"/>
    <property type="evidence" value="ECO:0000250"/>
    <property type="project" value="UniProtKB"/>
</dbReference>
<dbReference type="GO" id="GO:0007283">
    <property type="term" value="P:spermatogenesis"/>
    <property type="evidence" value="ECO:0000250"/>
    <property type="project" value="UniProtKB"/>
</dbReference>
<dbReference type="GO" id="GO:0001894">
    <property type="term" value="P:tissue homeostasis"/>
    <property type="evidence" value="ECO:0000250"/>
    <property type="project" value="UniProtKB"/>
</dbReference>
<dbReference type="CDD" id="cd22031">
    <property type="entry name" value="HMG-box_SoxE"/>
    <property type="match status" value="1"/>
</dbReference>
<dbReference type="FunFam" id="1.10.30.10:FF:000004">
    <property type="entry name" value="Transcription factor SOX-10"/>
    <property type="match status" value="1"/>
</dbReference>
<dbReference type="Gene3D" id="1.10.30.10">
    <property type="entry name" value="High mobility group box domain"/>
    <property type="match status" value="1"/>
</dbReference>
<dbReference type="InterPro" id="IPR009071">
    <property type="entry name" value="HMG_box_dom"/>
</dbReference>
<dbReference type="InterPro" id="IPR036910">
    <property type="entry name" value="HMG_box_dom_sf"/>
</dbReference>
<dbReference type="InterPro" id="IPR022151">
    <property type="entry name" value="Sox_N"/>
</dbReference>
<dbReference type="InterPro" id="IPR050917">
    <property type="entry name" value="SOX_TF"/>
</dbReference>
<dbReference type="PANTHER" id="PTHR45803">
    <property type="entry name" value="SOX100B"/>
    <property type="match status" value="1"/>
</dbReference>
<dbReference type="PANTHER" id="PTHR45803:SF1">
    <property type="entry name" value="TRANSCRIPTION FACTOR SOX-9"/>
    <property type="match status" value="1"/>
</dbReference>
<dbReference type="Pfam" id="PF00505">
    <property type="entry name" value="HMG_box"/>
    <property type="match status" value="1"/>
</dbReference>
<dbReference type="Pfam" id="PF12444">
    <property type="entry name" value="Sox_N"/>
    <property type="match status" value="1"/>
</dbReference>
<dbReference type="SMART" id="SM00398">
    <property type="entry name" value="HMG"/>
    <property type="match status" value="1"/>
</dbReference>
<dbReference type="SUPFAM" id="SSF47095">
    <property type="entry name" value="HMG-box"/>
    <property type="match status" value="1"/>
</dbReference>
<dbReference type="PROSITE" id="PS50118">
    <property type="entry name" value="HMG_BOX_2"/>
    <property type="match status" value="1"/>
</dbReference>
<keyword id="KW-0007">Acetylation</keyword>
<keyword id="KW-0010">Activator</keyword>
<keyword id="KW-0221">Differentiation</keyword>
<keyword id="KW-0238">DNA-binding</keyword>
<keyword id="KW-1017">Isopeptide bond</keyword>
<keyword id="KW-0539">Nucleus</keyword>
<keyword id="KW-0597">Phosphoprotein</keyword>
<keyword id="KW-1185">Reference proteome</keyword>
<keyword id="KW-0804">Transcription</keyword>
<keyword id="KW-0805">Transcription regulation</keyword>
<keyword id="KW-0832">Ubl conjugation</keyword>
<feature type="chain" id="PRO_0000048740" description="Transcription factor SOX-9">
    <location>
        <begin position="1"/>
        <end position="509"/>
    </location>
</feature>
<feature type="DNA-binding region" description="HMG box" evidence="3">
    <location>
        <begin position="105"/>
        <end position="173"/>
    </location>
</feature>
<feature type="region of interest" description="Disordered" evidence="4">
    <location>
        <begin position="1"/>
        <end position="67"/>
    </location>
</feature>
<feature type="region of interest" description="Dimerization (DIM)" evidence="1">
    <location>
        <begin position="63"/>
        <end position="103"/>
    </location>
</feature>
<feature type="region of interest" description="PQA" evidence="1">
    <location>
        <begin position="63"/>
        <end position="103"/>
    </location>
</feature>
<feature type="region of interest" description="Disordered" evidence="4">
    <location>
        <begin position="160"/>
        <end position="273"/>
    </location>
</feature>
<feature type="region of interest" description="Transactivation domain (TAM)" evidence="1">
    <location>
        <begin position="224"/>
        <end position="307"/>
    </location>
</feature>
<feature type="region of interest" description="Disordered" evidence="4">
    <location>
        <begin position="330"/>
        <end position="415"/>
    </location>
</feature>
<feature type="region of interest" description="Transactivation domain (TAC)" evidence="1">
    <location>
        <begin position="394"/>
        <end position="509"/>
    </location>
</feature>
<feature type="region of interest" description="Disordered" evidence="4">
    <location>
        <begin position="479"/>
        <end position="509"/>
    </location>
</feature>
<feature type="short sequence motif" description="9aaTAD 1" evidence="1">
    <location>
        <begin position="275"/>
        <end position="284"/>
    </location>
</feature>
<feature type="short sequence motif" description="9aaTAD 2" evidence="1">
    <location>
        <begin position="290"/>
        <end position="298"/>
    </location>
</feature>
<feature type="short sequence motif" description="9aaTAD 3" evidence="1">
    <location>
        <begin position="460"/>
        <end position="468"/>
    </location>
</feature>
<feature type="compositionally biased region" description="Low complexity" evidence="4">
    <location>
        <begin position="30"/>
        <end position="41"/>
    </location>
</feature>
<feature type="compositionally biased region" description="Polar residues" evidence="4">
    <location>
        <begin position="42"/>
        <end position="52"/>
    </location>
</feature>
<feature type="compositionally biased region" description="Basic and acidic residues" evidence="4">
    <location>
        <begin position="56"/>
        <end position="67"/>
    </location>
</feature>
<feature type="compositionally biased region" description="Basic and acidic residues" evidence="4">
    <location>
        <begin position="160"/>
        <end position="174"/>
    </location>
</feature>
<feature type="compositionally biased region" description="Pro residues" evidence="4">
    <location>
        <begin position="341"/>
        <end position="376"/>
    </location>
</feature>
<feature type="compositionally biased region" description="Polar residues" evidence="4">
    <location>
        <begin position="380"/>
        <end position="415"/>
    </location>
</feature>
<feature type="compositionally biased region" description="Polar residues" evidence="4">
    <location>
        <begin position="485"/>
        <end position="509"/>
    </location>
</feature>
<feature type="modified residue" description="Phosphoserine" evidence="2">
    <location>
        <position position="64"/>
    </location>
</feature>
<feature type="modified residue" description="Phosphoserine" evidence="2">
    <location>
        <position position="211"/>
    </location>
</feature>
<feature type="cross-link" description="Glycyl lysine isopeptide (Lys-Gly) (interchain with G-Cter in ubiquitin)" evidence="2">
    <location>
        <position position="398"/>
    </location>
</feature>
<proteinExistence type="evidence at transcript level"/>
<accession>P61753</accession>
<reference key="1">
    <citation type="journal article" date="2001" name="Am. J. Hum. Genet.">
        <title>Primate DAX1, SRY, and SOX9: evolutionary stratification of sex-determination pathway.</title>
        <authorList>
            <person name="Patel M."/>
            <person name="Dorman K.S."/>
            <person name="Zhang Y.-H."/>
            <person name="Huang B.-L."/>
            <person name="Arnold A.P."/>
            <person name="Sinsheimer J.S."/>
            <person name="Vilain E."/>
            <person name="McCabe E.R.B."/>
        </authorList>
    </citation>
    <scope>NUCLEOTIDE SEQUENCE [MRNA]</scope>
</reference>
<name>SOX9_MACMU</name>
<gene>
    <name type="primary">SOX9</name>
</gene>
<organism>
    <name type="scientific">Macaca mulatta</name>
    <name type="common">Rhesus macaque</name>
    <dbReference type="NCBI Taxonomy" id="9544"/>
    <lineage>
        <taxon>Eukaryota</taxon>
        <taxon>Metazoa</taxon>
        <taxon>Chordata</taxon>
        <taxon>Craniata</taxon>
        <taxon>Vertebrata</taxon>
        <taxon>Euteleostomi</taxon>
        <taxon>Mammalia</taxon>
        <taxon>Eutheria</taxon>
        <taxon>Euarchontoglires</taxon>
        <taxon>Primates</taxon>
        <taxon>Haplorrhini</taxon>
        <taxon>Catarrhini</taxon>
        <taxon>Cercopithecidae</taxon>
        <taxon>Cercopithecinae</taxon>
        <taxon>Macaca</taxon>
    </lineage>
</organism>
<protein>
    <recommendedName>
        <fullName evidence="5">Transcription factor SOX-9</fullName>
    </recommendedName>
</protein>